<protein>
    <recommendedName>
        <fullName>Flavodoxin</fullName>
    </recommendedName>
</protein>
<evidence type="ECO:0000250" key="1"/>
<evidence type="ECO:0000255" key="2">
    <source>
        <dbReference type="PROSITE-ProRule" id="PRU00088"/>
    </source>
</evidence>
<evidence type="ECO:0000269" key="3">
    <source>
    </source>
</evidence>
<evidence type="ECO:0000305" key="4"/>
<sequence>MAIIGIFFGSDTGNTENIAKMIQKQLGKDVADVHDIAKSSKEDLEAHDILLLGIPTWYYGEAQCDWDDFFPTLEEIDFNGKLVALFGCGDQEDYAEYFCDALGTIRDIIEPRGATIVGHWPTAGYHFEASKGLADDDHFVGLAIDEDRQPELTNERVEKWVKQVAEELHLEEIKNA</sequence>
<comment type="function">
    <text evidence="1">Low-potential electron donor to a number of redox enzymes.</text>
</comment>
<comment type="cofactor">
    <cofactor evidence="1">
        <name>FMN</name>
        <dbReference type="ChEBI" id="CHEBI:58210"/>
    </cofactor>
</comment>
<comment type="induction">
    <text evidence="3">By low iron conditions and by heat shock. Iron regulation is mediated through the fur protein.</text>
</comment>
<comment type="similarity">
    <text evidence="4">Belongs to the flavodoxin family.</text>
</comment>
<reference key="1">
    <citation type="journal article" date="1997" name="Gene">
        <title>Transcriptional regulation of a second flavodoxin gene from Klebsiella pneumoniae.</title>
        <authorList>
            <person name="Achenbach L.A."/>
            <person name="Genova E.G."/>
        </authorList>
    </citation>
    <scope>NUCLEOTIDE SEQUENCE [GENOMIC DNA]</scope>
    <scope>INDUCTION</scope>
    <source>
        <strain>ATCC 13883 / DSM 30104 / JCM 1662 / NBRC 14940 / NCIMB 13281 / NCTC 9633</strain>
    </source>
</reference>
<reference key="2">
    <citation type="journal article" date="1997" name="Gene">
        <title>The fur gene from Klebsiella pneumoniae: characterization, genomic organization and phylogenetic analysis.</title>
        <authorList>
            <person name="Achenbach L.A."/>
            <person name="Yang W."/>
        </authorList>
    </citation>
    <scope>NUCLEOTIDE SEQUENCE [GENOMIC DNA] OF 135-176</scope>
    <source>
        <strain>ATCC 13883 / DSM 30104 / JCM 1662 / NBRC 14940 / NCIMB 13281 / NCTC 9633</strain>
    </source>
</reference>
<keyword id="KW-0249">Electron transport</keyword>
<keyword id="KW-0285">Flavoprotein</keyword>
<keyword id="KW-0288">FMN</keyword>
<keyword id="KW-0813">Transport</keyword>
<accession>O07026</accession>
<feature type="chain" id="PRO_0000171636" description="Flavodoxin">
    <location>
        <begin position="1"/>
        <end position="176"/>
    </location>
</feature>
<feature type="domain" description="Flavodoxin-like" evidence="2">
    <location>
        <begin position="4"/>
        <end position="165"/>
    </location>
</feature>
<name>FLAV_KLEPN</name>
<organism>
    <name type="scientific">Klebsiella pneumoniae</name>
    <dbReference type="NCBI Taxonomy" id="573"/>
    <lineage>
        <taxon>Bacteria</taxon>
        <taxon>Pseudomonadati</taxon>
        <taxon>Pseudomonadota</taxon>
        <taxon>Gammaproteobacteria</taxon>
        <taxon>Enterobacterales</taxon>
        <taxon>Enterobacteriaceae</taxon>
        <taxon>Klebsiella/Raoultella group</taxon>
        <taxon>Klebsiella</taxon>
        <taxon>Klebsiella pneumoniae complex</taxon>
    </lineage>
</organism>
<dbReference type="EMBL" id="U67169">
    <property type="protein sequence ID" value="AAB65080.1"/>
    <property type="molecule type" value="Genomic_DNA"/>
</dbReference>
<dbReference type="EMBL" id="L23871">
    <property type="protein sequence ID" value="AAB51076.1"/>
    <property type="molecule type" value="Genomic_DNA"/>
</dbReference>
<dbReference type="RefSeq" id="WP_002894765.1">
    <property type="nucleotide sequence ID" value="NZ_WYAL01000003.1"/>
</dbReference>
<dbReference type="SMR" id="O07026"/>
<dbReference type="GeneID" id="93274367"/>
<dbReference type="OMA" id="ICGIPTW"/>
<dbReference type="GO" id="GO:0009055">
    <property type="term" value="F:electron transfer activity"/>
    <property type="evidence" value="ECO:0007669"/>
    <property type="project" value="InterPro"/>
</dbReference>
<dbReference type="GO" id="GO:0010181">
    <property type="term" value="F:FMN binding"/>
    <property type="evidence" value="ECO:0007669"/>
    <property type="project" value="InterPro"/>
</dbReference>
<dbReference type="FunFam" id="3.40.50.360:FF:000002">
    <property type="entry name" value="Flavodoxin"/>
    <property type="match status" value="1"/>
</dbReference>
<dbReference type="Gene3D" id="3.40.50.360">
    <property type="match status" value="1"/>
</dbReference>
<dbReference type="InterPro" id="IPR050619">
    <property type="entry name" value="Flavodoxin"/>
</dbReference>
<dbReference type="InterPro" id="IPR008254">
    <property type="entry name" value="Flavodoxin/NO_synth"/>
</dbReference>
<dbReference type="InterPro" id="IPR001226">
    <property type="entry name" value="Flavodoxin_CS"/>
</dbReference>
<dbReference type="InterPro" id="IPR010086">
    <property type="entry name" value="Flavodoxin_lc"/>
</dbReference>
<dbReference type="InterPro" id="IPR029039">
    <property type="entry name" value="Flavoprotein-like_sf"/>
</dbReference>
<dbReference type="NCBIfam" id="TIGR01752">
    <property type="entry name" value="flav_long"/>
    <property type="match status" value="1"/>
</dbReference>
<dbReference type="NCBIfam" id="NF006735">
    <property type="entry name" value="PRK09267.1-1"/>
    <property type="match status" value="1"/>
</dbReference>
<dbReference type="NCBIfam" id="NF006736">
    <property type="entry name" value="PRK09267.1-2"/>
    <property type="match status" value="1"/>
</dbReference>
<dbReference type="NCBIfam" id="NF006737">
    <property type="entry name" value="PRK09267.1-3"/>
    <property type="match status" value="1"/>
</dbReference>
<dbReference type="NCBIfam" id="NF006738">
    <property type="entry name" value="PRK09267.1-4"/>
    <property type="match status" value="1"/>
</dbReference>
<dbReference type="NCBIfam" id="NF006739">
    <property type="entry name" value="PRK09267.1-5"/>
    <property type="match status" value="1"/>
</dbReference>
<dbReference type="PANTHER" id="PTHR42809:SF1">
    <property type="entry name" value="FLAVODOXIN 1"/>
    <property type="match status" value="1"/>
</dbReference>
<dbReference type="PANTHER" id="PTHR42809">
    <property type="entry name" value="FLAVODOXIN 2"/>
    <property type="match status" value="1"/>
</dbReference>
<dbReference type="Pfam" id="PF00258">
    <property type="entry name" value="Flavodoxin_1"/>
    <property type="match status" value="1"/>
</dbReference>
<dbReference type="PIRSF" id="PIRSF038996">
    <property type="entry name" value="FldA"/>
    <property type="match status" value="1"/>
</dbReference>
<dbReference type="SUPFAM" id="SSF52218">
    <property type="entry name" value="Flavoproteins"/>
    <property type="match status" value="1"/>
</dbReference>
<dbReference type="PROSITE" id="PS00201">
    <property type="entry name" value="FLAVODOXIN"/>
    <property type="match status" value="1"/>
</dbReference>
<dbReference type="PROSITE" id="PS50902">
    <property type="entry name" value="FLAVODOXIN_LIKE"/>
    <property type="match status" value="1"/>
</dbReference>
<gene>
    <name type="primary">fldA</name>
</gene>
<proteinExistence type="evidence at transcript level"/>